<evidence type="ECO:0000250" key="1">
    <source>
        <dbReference type="UniProtKB" id="P24182"/>
    </source>
</evidence>
<evidence type="ECO:0000255" key="2">
    <source>
        <dbReference type="PROSITE-ProRule" id="PRU00409"/>
    </source>
</evidence>
<evidence type="ECO:0000255" key="3">
    <source>
        <dbReference type="PROSITE-ProRule" id="PRU00969"/>
    </source>
</evidence>
<evidence type="ECO:0000269" key="4">
    <source>
    </source>
</evidence>
<evidence type="ECO:0000269" key="5">
    <source>
    </source>
</evidence>
<evidence type="ECO:0000269" key="6">
    <source>
    </source>
</evidence>
<evidence type="ECO:0000269" key="7">
    <source>
    </source>
</evidence>
<evidence type="ECO:0000305" key="8"/>
<gene>
    <name type="primary">CAC2</name>
    <name type="ordered locus">At5g35360</name>
    <name type="ORF">T26D22.8</name>
</gene>
<name>ACCC_ARATH</name>
<organism>
    <name type="scientific">Arabidopsis thaliana</name>
    <name type="common">Mouse-ear cress</name>
    <dbReference type="NCBI Taxonomy" id="3702"/>
    <lineage>
        <taxon>Eukaryota</taxon>
        <taxon>Viridiplantae</taxon>
        <taxon>Streptophyta</taxon>
        <taxon>Embryophyta</taxon>
        <taxon>Tracheophyta</taxon>
        <taxon>Spermatophyta</taxon>
        <taxon>Magnoliopsida</taxon>
        <taxon>eudicotyledons</taxon>
        <taxon>Gunneridae</taxon>
        <taxon>Pentapetalae</taxon>
        <taxon>rosids</taxon>
        <taxon>malvids</taxon>
        <taxon>Brassicales</taxon>
        <taxon>Brassicaceae</taxon>
        <taxon>Camelineae</taxon>
        <taxon>Arabidopsis</taxon>
    </lineage>
</organism>
<proteinExistence type="evidence at protein level"/>
<accession>O04983</accession>
<accession>P93650</accession>
<accession>Q9C5F8</accession>
<reference key="1">
    <citation type="journal article" date="1997" name="Plant Mol. Biol.">
        <title>Isolation and characterization of an Arabidopsis biotin carboxylase gene and its promoter.</title>
        <authorList>
            <person name="Bao X."/>
            <person name="Shorrosh B.S."/>
            <person name="Ohlrogge J.B."/>
        </authorList>
    </citation>
    <scope>NUCLEOTIDE SEQUENCE [GENOMIC DNA]</scope>
    <scope>TISSUE SPECIFICITY</scope>
    <source>
        <strain>cv. Columbia</strain>
    </source>
</reference>
<reference key="2">
    <citation type="journal article" date="1997" name="Plant Physiol.">
        <title>Biochemical and molecular biological characterization of CAC2, the Arabidopsis thaliana gene coding for the biotin carboxylase subunit of the plastidic acetyl-coenzyme A carboxylase.</title>
        <authorList>
            <person name="Sun J."/>
            <person name="Ke J."/>
            <person name="Johnson J.L."/>
            <person name="Nikolau B.J."/>
            <person name="Wurtele E.S."/>
        </authorList>
    </citation>
    <scope>NUCLEOTIDE SEQUENCE [GENOMIC DNA / MRNA]</scope>
    <scope>FUNCTION</scope>
    <scope>CATALYTIC ACTIVITY</scope>
    <scope>BIOPHYSICOCHEMICAL PROPERTIES</scope>
    <scope>COFACTOR</scope>
    <scope>TISSUE SPECIFICITY</scope>
    <source>
        <strain>cv. Columbia</strain>
        <strain>cv. Landsberg erecta</strain>
    </source>
</reference>
<reference key="3">
    <citation type="submission" date="1999-04" db="EMBL/GenBank/DDBJ databases">
        <title>Structural analysis of Arabidopsis thaliana chromosome 5. XI.</title>
        <authorList>
            <person name="Kaneko T."/>
            <person name="Katoh T."/>
            <person name="Asamizu E."/>
            <person name="Sato S."/>
            <person name="Nakamura Y."/>
            <person name="Kotani H."/>
            <person name="Tabata S."/>
        </authorList>
    </citation>
    <scope>NUCLEOTIDE SEQUENCE [LARGE SCALE GENOMIC DNA]</scope>
    <source>
        <strain>cv. Columbia</strain>
    </source>
</reference>
<reference key="4">
    <citation type="journal article" date="2000" name="Nature">
        <title>Sequence and analysis of chromosome 5 of the plant Arabidopsis thaliana.</title>
        <authorList>
            <person name="Tabata S."/>
            <person name="Kaneko T."/>
            <person name="Nakamura Y."/>
            <person name="Kotani H."/>
            <person name="Kato T."/>
            <person name="Asamizu E."/>
            <person name="Miyajima N."/>
            <person name="Sasamoto S."/>
            <person name="Kimura T."/>
            <person name="Hosouchi T."/>
            <person name="Kawashima K."/>
            <person name="Kohara M."/>
            <person name="Matsumoto M."/>
            <person name="Matsuno A."/>
            <person name="Muraki A."/>
            <person name="Nakayama S."/>
            <person name="Nakazaki N."/>
            <person name="Naruo K."/>
            <person name="Okumura S."/>
            <person name="Shinpo S."/>
            <person name="Takeuchi C."/>
            <person name="Wada T."/>
            <person name="Watanabe A."/>
            <person name="Yamada M."/>
            <person name="Yasuda M."/>
            <person name="Sato S."/>
            <person name="de la Bastide M."/>
            <person name="Huang E."/>
            <person name="Spiegel L."/>
            <person name="Gnoj L."/>
            <person name="O'Shaughnessy A."/>
            <person name="Preston R."/>
            <person name="Habermann K."/>
            <person name="Murray J."/>
            <person name="Johnson D."/>
            <person name="Rohlfing T."/>
            <person name="Nelson J."/>
            <person name="Stoneking T."/>
            <person name="Pepin K."/>
            <person name="Spieth J."/>
            <person name="Sekhon M."/>
            <person name="Armstrong J."/>
            <person name="Becker M."/>
            <person name="Belter E."/>
            <person name="Cordum H."/>
            <person name="Cordes M."/>
            <person name="Courtney L."/>
            <person name="Courtney W."/>
            <person name="Dante M."/>
            <person name="Du H."/>
            <person name="Edwards J."/>
            <person name="Fryman J."/>
            <person name="Haakensen B."/>
            <person name="Lamar E."/>
            <person name="Latreille P."/>
            <person name="Leonard S."/>
            <person name="Meyer R."/>
            <person name="Mulvaney E."/>
            <person name="Ozersky P."/>
            <person name="Riley A."/>
            <person name="Strowmatt C."/>
            <person name="Wagner-McPherson C."/>
            <person name="Wollam A."/>
            <person name="Yoakum M."/>
            <person name="Bell M."/>
            <person name="Dedhia N."/>
            <person name="Parnell L."/>
            <person name="Shah R."/>
            <person name="Rodriguez M."/>
            <person name="Hoon See L."/>
            <person name="Vil D."/>
            <person name="Baker J."/>
            <person name="Kirchoff K."/>
            <person name="Toth K."/>
            <person name="King L."/>
            <person name="Bahret A."/>
            <person name="Miller B."/>
            <person name="Marra M.A."/>
            <person name="Martienssen R."/>
            <person name="McCombie W.R."/>
            <person name="Wilson R.K."/>
            <person name="Murphy G."/>
            <person name="Bancroft I."/>
            <person name="Volckaert G."/>
            <person name="Wambutt R."/>
            <person name="Duesterhoeft A."/>
            <person name="Stiekema W."/>
            <person name="Pohl T."/>
            <person name="Entian K.-D."/>
            <person name="Terryn N."/>
            <person name="Hartley N."/>
            <person name="Bent E."/>
            <person name="Johnson S."/>
            <person name="Langham S.-A."/>
            <person name="McCullagh B."/>
            <person name="Robben J."/>
            <person name="Grymonprez B."/>
            <person name="Zimmermann W."/>
            <person name="Ramsperger U."/>
            <person name="Wedler H."/>
            <person name="Balke K."/>
            <person name="Wedler E."/>
            <person name="Peters S."/>
            <person name="van Staveren M."/>
            <person name="Dirkse W."/>
            <person name="Mooijman P."/>
            <person name="Klein Lankhorst R."/>
            <person name="Weitzenegger T."/>
            <person name="Bothe G."/>
            <person name="Rose M."/>
            <person name="Hauf J."/>
            <person name="Berneiser S."/>
            <person name="Hempel S."/>
            <person name="Feldpausch M."/>
            <person name="Lamberth S."/>
            <person name="Villarroel R."/>
            <person name="Gielen J."/>
            <person name="Ardiles W."/>
            <person name="Bents O."/>
            <person name="Lemcke K."/>
            <person name="Kolesov G."/>
            <person name="Mayer K.F.X."/>
            <person name="Rudd S."/>
            <person name="Schoof H."/>
            <person name="Schueller C."/>
            <person name="Zaccaria P."/>
            <person name="Mewes H.-W."/>
            <person name="Bevan M."/>
            <person name="Fransz P.F."/>
        </authorList>
    </citation>
    <scope>NUCLEOTIDE SEQUENCE [LARGE SCALE GENOMIC DNA]</scope>
    <source>
        <strain>cv. Columbia</strain>
    </source>
</reference>
<reference key="5">
    <citation type="journal article" date="2017" name="Plant J.">
        <title>Araport11: a complete reannotation of the Arabidopsis thaliana reference genome.</title>
        <authorList>
            <person name="Cheng C.Y."/>
            <person name="Krishnakumar V."/>
            <person name="Chan A.P."/>
            <person name="Thibaud-Nissen F."/>
            <person name="Schobel S."/>
            <person name="Town C.D."/>
        </authorList>
    </citation>
    <scope>GENOME REANNOTATION</scope>
    <source>
        <strain>cv. Columbia</strain>
    </source>
</reference>
<reference key="6">
    <citation type="journal article" date="2003" name="Science">
        <title>Empirical analysis of transcriptional activity in the Arabidopsis genome.</title>
        <authorList>
            <person name="Yamada K."/>
            <person name="Lim J."/>
            <person name="Dale J.M."/>
            <person name="Chen H."/>
            <person name="Shinn P."/>
            <person name="Palm C.J."/>
            <person name="Southwick A.M."/>
            <person name="Wu H.C."/>
            <person name="Kim C.J."/>
            <person name="Nguyen M."/>
            <person name="Pham P.K."/>
            <person name="Cheuk R.F."/>
            <person name="Karlin-Newmann G."/>
            <person name="Liu S.X."/>
            <person name="Lam B."/>
            <person name="Sakano H."/>
            <person name="Wu T."/>
            <person name="Yu G."/>
            <person name="Miranda M."/>
            <person name="Quach H.L."/>
            <person name="Tripp M."/>
            <person name="Chang C.H."/>
            <person name="Lee J.M."/>
            <person name="Toriumi M.J."/>
            <person name="Chan M.M."/>
            <person name="Tang C.C."/>
            <person name="Onodera C.S."/>
            <person name="Deng J.M."/>
            <person name="Akiyama K."/>
            <person name="Ansari Y."/>
            <person name="Arakawa T."/>
            <person name="Banh J."/>
            <person name="Banno F."/>
            <person name="Bowser L."/>
            <person name="Brooks S.Y."/>
            <person name="Carninci P."/>
            <person name="Chao Q."/>
            <person name="Choy N."/>
            <person name="Enju A."/>
            <person name="Goldsmith A.D."/>
            <person name="Gurjal M."/>
            <person name="Hansen N.F."/>
            <person name="Hayashizaki Y."/>
            <person name="Johnson-Hopson C."/>
            <person name="Hsuan V.W."/>
            <person name="Iida K."/>
            <person name="Karnes M."/>
            <person name="Khan S."/>
            <person name="Koesema E."/>
            <person name="Ishida J."/>
            <person name="Jiang P.X."/>
            <person name="Jones T."/>
            <person name="Kawai J."/>
            <person name="Kamiya A."/>
            <person name="Meyers C."/>
            <person name="Nakajima M."/>
            <person name="Narusaka M."/>
            <person name="Seki M."/>
            <person name="Sakurai T."/>
            <person name="Satou M."/>
            <person name="Tamse R."/>
            <person name="Vaysberg M."/>
            <person name="Wallender E.K."/>
            <person name="Wong C."/>
            <person name="Yamamura Y."/>
            <person name="Yuan S."/>
            <person name="Shinozaki K."/>
            <person name="Davis R.W."/>
            <person name="Theologis A."/>
            <person name="Ecker J.R."/>
        </authorList>
    </citation>
    <scope>NUCLEOTIDE SEQUENCE [LARGE SCALE MRNA]</scope>
    <source>
        <strain>cv. Columbia</strain>
    </source>
</reference>
<reference key="7">
    <citation type="submission" date="2002-03" db="EMBL/GenBank/DDBJ databases">
        <title>Full-length cDNA from Arabidopsis thaliana.</title>
        <authorList>
            <person name="Brover V.V."/>
            <person name="Troukhan M.E."/>
            <person name="Alexandrov N.A."/>
            <person name="Lu Y.-P."/>
            <person name="Flavell R.B."/>
            <person name="Feldmann K.A."/>
        </authorList>
    </citation>
    <scope>NUCLEOTIDE SEQUENCE [LARGE SCALE MRNA]</scope>
</reference>
<reference key="8">
    <citation type="journal article" date="2000" name="Plant Physiol.">
        <title>Coordinate regulation of the nuclear and plastidic genes coding for the subunits of the heteromeric acetyl-coenzyme A carboxylase.</title>
        <authorList>
            <person name="Ke J."/>
            <person name="Wen T.N."/>
            <person name="Nikolau B.J."/>
            <person name="Wurtele E.S."/>
        </authorList>
    </citation>
    <scope>TISSUE SPECIFICITY</scope>
    <source>
        <strain>cv. Columbia</strain>
    </source>
</reference>
<reference key="9">
    <citation type="journal article" date="2007" name="Mol. Cell. Proteomics">
        <title>Multidimensional protein identification technology (MudPIT) analysis of ubiquitinated proteins in plants.</title>
        <authorList>
            <person name="Maor R."/>
            <person name="Jones A."/>
            <person name="Nuehse T.S."/>
            <person name="Studholme D.J."/>
            <person name="Peck S.C."/>
            <person name="Shirasu K."/>
        </authorList>
    </citation>
    <scope>IDENTIFICATION BY MASS SPECTROMETRY [LARGE SCALE ANALYSIS]</scope>
    <source>
        <strain>cv. Landsberg erecta</strain>
    </source>
</reference>
<reference key="10">
    <citation type="journal article" date="2008" name="PLoS ONE">
        <title>Sorting signals, N-terminal modifications and abundance of the chloroplast proteome.</title>
        <authorList>
            <person name="Zybailov B."/>
            <person name="Rutschow H."/>
            <person name="Friso G."/>
            <person name="Rudella A."/>
            <person name="Emanuelsson O."/>
            <person name="Sun Q."/>
            <person name="van Wijk K.J."/>
        </authorList>
    </citation>
    <scope>IDENTIFICATION BY MASS SPECTROMETRY</scope>
    <scope>SUBCELLULAR LOCATION [LARGE SCALE ANALYSIS]</scope>
</reference>
<keyword id="KW-0025">Alternative splicing</keyword>
<keyword id="KW-0067">ATP-binding</keyword>
<keyword id="KW-0092">Biotin</keyword>
<keyword id="KW-0150">Chloroplast</keyword>
<keyword id="KW-0275">Fatty acid biosynthesis</keyword>
<keyword id="KW-0276">Fatty acid metabolism</keyword>
<keyword id="KW-0436">Ligase</keyword>
<keyword id="KW-0444">Lipid biosynthesis</keyword>
<keyword id="KW-0443">Lipid metabolism</keyword>
<keyword id="KW-0460">Magnesium</keyword>
<keyword id="KW-0464">Manganese</keyword>
<keyword id="KW-0479">Metal-binding</keyword>
<keyword id="KW-0547">Nucleotide-binding</keyword>
<keyword id="KW-0934">Plastid</keyword>
<keyword id="KW-1185">Reference proteome</keyword>
<keyword id="KW-0809">Transit peptide</keyword>
<feature type="transit peptide" description="Chloroplast" evidence="8">
    <location>
        <begin position="1"/>
        <end position="71"/>
    </location>
</feature>
<feature type="chain" id="PRO_0000391772" description="Biotin carboxylase, chloroplastic">
    <location>
        <begin position="72"/>
        <end position="537"/>
    </location>
</feature>
<feature type="domain" description="ATP-grasp" evidence="2">
    <location>
        <begin position="192"/>
        <end position="389"/>
    </location>
</feature>
<feature type="active site" evidence="1">
    <location>
        <position position="364"/>
    </location>
</feature>
<feature type="binding site" evidence="1">
    <location>
        <position position="188"/>
    </location>
    <ligand>
        <name>ATP</name>
        <dbReference type="ChEBI" id="CHEBI:30616"/>
    </ligand>
</feature>
<feature type="binding site" evidence="1">
    <location>
        <position position="230"/>
    </location>
    <ligand>
        <name>ATP</name>
        <dbReference type="ChEBI" id="CHEBI:30616"/>
    </ligand>
</feature>
<feature type="binding site" evidence="1">
    <location>
        <begin position="236"/>
        <end position="237"/>
    </location>
    <ligand>
        <name>ATP</name>
        <dbReference type="ChEBI" id="CHEBI:30616"/>
    </ligand>
</feature>
<feature type="binding site" evidence="1">
    <location>
        <begin position="272"/>
        <end position="275"/>
    </location>
    <ligand>
        <name>ATP</name>
        <dbReference type="ChEBI" id="CHEBI:30616"/>
    </ligand>
</feature>
<feature type="binding site" evidence="1">
    <location>
        <position position="280"/>
    </location>
    <ligand>
        <name>ATP</name>
        <dbReference type="ChEBI" id="CHEBI:30616"/>
    </ligand>
</feature>
<feature type="binding site" evidence="1">
    <location>
        <position position="309"/>
    </location>
    <ligand>
        <name>hydrogencarbonate</name>
        <dbReference type="ChEBI" id="CHEBI:17544"/>
    </ligand>
</feature>
<feature type="binding site" evidence="1">
    <location>
        <position position="347"/>
    </location>
    <ligand>
        <name>ATP</name>
        <dbReference type="ChEBI" id="CHEBI:30616"/>
    </ligand>
</feature>
<feature type="binding site" evidence="3">
    <location>
        <position position="347"/>
    </location>
    <ligand>
        <name>Mg(2+)</name>
        <dbReference type="ChEBI" id="CHEBI:18420"/>
        <label>1</label>
    </ligand>
</feature>
<feature type="binding site" evidence="3">
    <location>
        <position position="347"/>
    </location>
    <ligand>
        <name>Mn(2+)</name>
        <dbReference type="ChEBI" id="CHEBI:29035"/>
        <label>1</label>
    </ligand>
</feature>
<feature type="binding site" evidence="1">
    <location>
        <position position="360"/>
    </location>
    <ligand>
        <name>ATP</name>
        <dbReference type="ChEBI" id="CHEBI:30616"/>
    </ligand>
</feature>
<feature type="binding site" evidence="3">
    <location>
        <position position="360"/>
    </location>
    <ligand>
        <name>Mg(2+)</name>
        <dbReference type="ChEBI" id="CHEBI:18420"/>
        <label>1</label>
    </ligand>
</feature>
<feature type="binding site" evidence="3">
    <location>
        <position position="360"/>
    </location>
    <ligand>
        <name>Mg(2+)</name>
        <dbReference type="ChEBI" id="CHEBI:18420"/>
        <label>2</label>
    </ligand>
</feature>
<feature type="binding site" evidence="3">
    <location>
        <position position="360"/>
    </location>
    <ligand>
        <name>Mn(2+)</name>
        <dbReference type="ChEBI" id="CHEBI:29035"/>
        <label>1</label>
    </ligand>
</feature>
<feature type="binding site" evidence="3">
    <location>
        <position position="360"/>
    </location>
    <ligand>
        <name>Mn(2+)</name>
        <dbReference type="ChEBI" id="CHEBI:29035"/>
        <label>2</label>
    </ligand>
</feature>
<feature type="binding site" evidence="3">
    <location>
        <position position="362"/>
    </location>
    <ligand>
        <name>Mg(2+)</name>
        <dbReference type="ChEBI" id="CHEBI:18420"/>
        <label>2</label>
    </ligand>
</feature>
<feature type="binding site" evidence="3">
    <location>
        <position position="362"/>
    </location>
    <ligand>
        <name>Mn(2+)</name>
        <dbReference type="ChEBI" id="CHEBI:29035"/>
        <label>2</label>
    </ligand>
</feature>
<feature type="binding site" evidence="1">
    <location>
        <position position="364"/>
    </location>
    <ligand>
        <name>hydrogencarbonate</name>
        <dbReference type="ChEBI" id="CHEBI:17544"/>
    </ligand>
</feature>
<feature type="binding site" evidence="1">
    <location>
        <position position="367"/>
    </location>
    <ligand>
        <name>hydrogencarbonate</name>
        <dbReference type="ChEBI" id="CHEBI:17544"/>
    </ligand>
</feature>
<feature type="binding site" evidence="1">
    <location>
        <position position="410"/>
    </location>
    <ligand>
        <name>biotin</name>
        <dbReference type="ChEBI" id="CHEBI:57586"/>
    </ligand>
</feature>
<feature type="binding site" evidence="1">
    <location>
        <position position="410"/>
    </location>
    <ligand>
        <name>hydrogencarbonate</name>
        <dbReference type="ChEBI" id="CHEBI:17544"/>
    </ligand>
</feature>
<feature type="sequence conflict" description="In Ref. 1; CAA70282." evidence="8" ref="1">
    <original>S</original>
    <variation>T</variation>
    <location>
        <position position="181"/>
    </location>
</feature>
<feature type="sequence conflict" description="In Ref. 1; CAA70282." evidence="8" ref="1">
    <original>K</original>
    <variation>T</variation>
    <location>
        <position position="230"/>
    </location>
</feature>
<feature type="sequence conflict" description="In Ref. 1; CAA70282." evidence="8" ref="1">
    <location>
        <position position="314"/>
    </location>
</feature>
<feature type="sequence conflict" description="In Ref. 6; AAK25989." evidence="8" ref="6">
    <original>D</original>
    <variation>N</variation>
    <location>
        <position position="447"/>
    </location>
</feature>
<protein>
    <recommendedName>
        <fullName>Biotin carboxylase, chloroplastic</fullName>
        <ecNumber evidence="7">6.3.4.14</ecNumber>
    </recommendedName>
    <alternativeName>
        <fullName evidence="8">Acetyl-coenzyme A carboxylase biotin carboxylase subunit A</fullName>
    </alternativeName>
</protein>
<sequence>MDASMITNSKSITSPPSLALGKSGGGGVIRSSLCNLMMPSKVNFPRQRTQTLKVSQKKLKRATSGGLGVTCSGGDKILVANRGEIAVRVIRTAHEMGIPCVAVYSTIDKDALHVKLADEAVCIGEAPSNQSYLVIPNVLSAAISRGCTMLHPGYGFLSENALFVEMCRDHGINFIGPNPDSIRVMGDKATARETMKNAGVPTVPGSDGLLQSTEEAVRVANEIGFPVMIKATAGGGGRGMRLAKEPGEFVKLLQQAKSEAAAAFGNDGCYLEKFVQNPRHIEFQVLADKFGNVVHFGERDCSIQRRNQKLLEEAPSPALTAELRKAMGDAAVAAAASIGYIGVGTVEFLLDERGSFYFMEMNTRIQVEHPVTEMIYSVDLIEEQIRVAMGEKLRYKQEDIVLRGHSIECRINAEDPFKGFRPGPGRITSYLPSGGPFVRMDSHVYSDYVVPPSYDSLLGKLIVWAPTREKAIERMKRALNDTIITGVPTTINYHKLILDVEDFKNGKVDTAFIVKHEEELAEPQEIVAVKDLTNATV</sequence>
<comment type="function">
    <text evidence="7">This protein is a component of the acetyl coenzyme A carboxylase complex; first, biotin carboxylase catalyzes the carboxylation of the carrier protein and then the transcarboxylase transfers the carboxyl group to form malonyl-CoA.</text>
</comment>
<comment type="catalytic activity">
    <reaction evidence="7">
        <text>N(6)-biotinyl-L-lysyl-[protein] + hydrogencarbonate + ATP = N(6)-carboxybiotinyl-L-lysyl-[protein] + ADP + phosphate + H(+)</text>
        <dbReference type="Rhea" id="RHEA:13501"/>
        <dbReference type="Rhea" id="RHEA-COMP:10505"/>
        <dbReference type="Rhea" id="RHEA-COMP:10506"/>
        <dbReference type="ChEBI" id="CHEBI:15378"/>
        <dbReference type="ChEBI" id="CHEBI:17544"/>
        <dbReference type="ChEBI" id="CHEBI:30616"/>
        <dbReference type="ChEBI" id="CHEBI:43474"/>
        <dbReference type="ChEBI" id="CHEBI:83144"/>
        <dbReference type="ChEBI" id="CHEBI:83145"/>
        <dbReference type="ChEBI" id="CHEBI:456216"/>
        <dbReference type="EC" id="6.3.4.14"/>
    </reaction>
</comment>
<comment type="cofactor">
    <cofactor evidence="3">
        <name>Mg(2+)</name>
        <dbReference type="ChEBI" id="CHEBI:18420"/>
    </cofactor>
    <cofactor evidence="3">
        <name>Mn(2+)</name>
        <dbReference type="ChEBI" id="CHEBI:29035"/>
    </cofactor>
    <text evidence="3">Binds 2 magnesium or manganese ions per subunit.</text>
</comment>
<comment type="biophysicochemical properties">
    <kinetics>
        <KM evidence="7">2.3 mM for biotin</KM>
        <KM evidence="7">88 mM for bicarbonate</KM>
        <Vmax evidence="7">16.0 nmol/min/mg enzyme</Vmax>
    </kinetics>
    <phDependence>
        <text evidence="7">Optimum pH is 8.3-8.9.</text>
    </phDependence>
</comment>
<comment type="pathway">
    <text>Lipid metabolism; malonyl-CoA biosynthesis; malonyl-CoA from acetyl-CoA: step 1/1.</text>
</comment>
<comment type="subunit">
    <text evidence="8">Acetyl-CoA carboxylase is a heterohexamer composed of biotin carboxyl carrier protein, biotin carboxylase and two subunits each of ACCase subunit alpha and ACCase plastid-coded subunit beta (accD).</text>
</comment>
<comment type="subcellular location">
    <subcellularLocation>
        <location evidence="5">Plastid</location>
        <location evidence="5">Chloroplast</location>
    </subcellularLocation>
</comment>
<comment type="alternative products">
    <event type="alternative splicing"/>
    <isoform>
        <id>O04983-1</id>
        <name>1</name>
        <sequence type="displayed"/>
    </isoform>
    <text>A number of isoforms are produced. According to EST sequences.</text>
</comment>
<comment type="tissue specificity">
    <text evidence="4 6 7">Accumulates in fatty acids synthesizing tissues. Mostly expressed in siliques, developing leaves, and flowers, present in roots and embryos (especially at torpedo stage), and, to a lower extent, in mature leaves.</text>
</comment>
<comment type="sequence caution" evidence="8">
    <conflict type="erroneous gene model prediction">
        <sequence resource="EMBL-CDS" id="CAA70282"/>
    </conflict>
</comment>
<dbReference type="EC" id="6.3.4.14" evidence="7"/>
<dbReference type="EMBL" id="Y09061">
    <property type="protein sequence ID" value="CAA70282.1"/>
    <property type="status" value="ALT_SEQ"/>
    <property type="molecule type" value="Genomic_DNA"/>
</dbReference>
<dbReference type="EMBL" id="U90879">
    <property type="protein sequence ID" value="AAC09008.1"/>
    <property type="molecule type" value="mRNA"/>
</dbReference>
<dbReference type="EMBL" id="U91414">
    <property type="protein sequence ID" value="AAC09009.1"/>
    <property type="molecule type" value="Genomic_DNA"/>
</dbReference>
<dbReference type="EMBL" id="AB025636">
    <property type="protein sequence ID" value="BAB11486.1"/>
    <property type="molecule type" value="Genomic_DNA"/>
</dbReference>
<dbReference type="EMBL" id="AF058826">
    <property type="protein sequence ID" value="AAC13611.1"/>
    <property type="molecule type" value="Genomic_DNA"/>
</dbReference>
<dbReference type="EMBL" id="CP002688">
    <property type="protein sequence ID" value="AED93956.1"/>
    <property type="molecule type" value="Genomic_DNA"/>
</dbReference>
<dbReference type="EMBL" id="AF360279">
    <property type="protein sequence ID" value="AAK25989.1"/>
    <property type="molecule type" value="mRNA"/>
</dbReference>
<dbReference type="EMBL" id="AY142630">
    <property type="protein sequence ID" value="AAN13088.1"/>
    <property type="molecule type" value="mRNA"/>
</dbReference>
<dbReference type="EMBL" id="AY085968">
    <property type="protein sequence ID" value="AAM63178.1"/>
    <property type="molecule type" value="mRNA"/>
</dbReference>
<dbReference type="PIR" id="T01180">
    <property type="entry name" value="T01180"/>
</dbReference>
<dbReference type="RefSeq" id="NP_198386.1">
    <molecule id="O04983-1"/>
    <property type="nucleotide sequence ID" value="NM_122927.4"/>
</dbReference>
<dbReference type="SMR" id="O04983"/>
<dbReference type="BioGRID" id="18751">
    <property type="interactions" value="5"/>
</dbReference>
<dbReference type="FunCoup" id="O04983">
    <property type="interactions" value="785"/>
</dbReference>
<dbReference type="IntAct" id="O04983">
    <property type="interactions" value="1"/>
</dbReference>
<dbReference type="STRING" id="3702.O04983"/>
<dbReference type="iPTMnet" id="O04983"/>
<dbReference type="MetOSite" id="O04983"/>
<dbReference type="PaxDb" id="3702-AT5G35360.3"/>
<dbReference type="ProteomicsDB" id="244341">
    <molecule id="O04983-1"/>
</dbReference>
<dbReference type="EnsemblPlants" id="AT5G35360.1">
    <molecule id="O04983-1"/>
    <property type="protein sequence ID" value="AT5G35360.1"/>
    <property type="gene ID" value="AT5G35360"/>
</dbReference>
<dbReference type="GeneID" id="833497"/>
<dbReference type="Gramene" id="AT5G35360.1">
    <molecule id="O04983-1"/>
    <property type="protein sequence ID" value="AT5G35360.1"/>
    <property type="gene ID" value="AT5G35360"/>
</dbReference>
<dbReference type="KEGG" id="ath:AT5G35360"/>
<dbReference type="Araport" id="AT5G35360"/>
<dbReference type="TAIR" id="AT5G35360">
    <property type="gene designation" value="CAC2"/>
</dbReference>
<dbReference type="eggNOG" id="KOG0238">
    <property type="taxonomic scope" value="Eukaryota"/>
</dbReference>
<dbReference type="InParanoid" id="O04983"/>
<dbReference type="OMA" id="KXHVEVQ"/>
<dbReference type="PhylomeDB" id="O04983"/>
<dbReference type="BioCyc" id="ARA:AT5G35360-MONOMER"/>
<dbReference type="BioCyc" id="MetaCyc:AT5G35360-MONOMER"/>
<dbReference type="UniPathway" id="UPA00655">
    <property type="reaction ID" value="UER00711"/>
</dbReference>
<dbReference type="PRO" id="PR:O04983"/>
<dbReference type="Proteomes" id="UP000006548">
    <property type="component" value="Chromosome 5"/>
</dbReference>
<dbReference type="ExpressionAtlas" id="O04983">
    <property type="expression patterns" value="baseline and differential"/>
</dbReference>
<dbReference type="GO" id="GO:0009507">
    <property type="term" value="C:chloroplast"/>
    <property type="evidence" value="ECO:0007669"/>
    <property type="project" value="UniProtKB-SubCell"/>
</dbReference>
<dbReference type="GO" id="GO:0003989">
    <property type="term" value="F:acetyl-CoA carboxylase activity"/>
    <property type="evidence" value="ECO:0007669"/>
    <property type="project" value="UniProtKB-EC"/>
</dbReference>
<dbReference type="GO" id="GO:0005524">
    <property type="term" value="F:ATP binding"/>
    <property type="evidence" value="ECO:0007669"/>
    <property type="project" value="UniProtKB-KW"/>
</dbReference>
<dbReference type="GO" id="GO:0004075">
    <property type="term" value="F:biotin carboxylase activity"/>
    <property type="evidence" value="ECO:0007669"/>
    <property type="project" value="UniProtKB-EC"/>
</dbReference>
<dbReference type="GO" id="GO:0046872">
    <property type="term" value="F:metal ion binding"/>
    <property type="evidence" value="ECO:0007669"/>
    <property type="project" value="UniProtKB-KW"/>
</dbReference>
<dbReference type="GO" id="GO:0006633">
    <property type="term" value="P:fatty acid biosynthetic process"/>
    <property type="evidence" value="ECO:0007669"/>
    <property type="project" value="UniProtKB-KW"/>
</dbReference>
<dbReference type="GO" id="GO:2001295">
    <property type="term" value="P:malonyl-CoA biosynthetic process"/>
    <property type="evidence" value="ECO:0007669"/>
    <property type="project" value="UniProtKB-UniPathway"/>
</dbReference>
<dbReference type="FunFam" id="3.30.1490.20:FF:000018">
    <property type="entry name" value="Biotin carboxylase"/>
    <property type="match status" value="1"/>
</dbReference>
<dbReference type="FunFam" id="3.30.470.20:FF:000045">
    <property type="entry name" value="Biotin carboxylase"/>
    <property type="match status" value="1"/>
</dbReference>
<dbReference type="FunFam" id="3.40.50.20:FF:000010">
    <property type="entry name" value="Propionyl-CoA carboxylase subunit alpha"/>
    <property type="match status" value="1"/>
</dbReference>
<dbReference type="Gene3D" id="3.40.50.20">
    <property type="match status" value="1"/>
</dbReference>
<dbReference type="Gene3D" id="3.30.1490.20">
    <property type="entry name" value="ATP-grasp fold, A domain"/>
    <property type="match status" value="1"/>
</dbReference>
<dbReference type="Gene3D" id="3.30.470.20">
    <property type="entry name" value="ATP-grasp fold, B domain"/>
    <property type="match status" value="1"/>
</dbReference>
<dbReference type="InterPro" id="IPR051602">
    <property type="entry name" value="ACC_Biotin_Carboxylase"/>
</dbReference>
<dbReference type="InterPro" id="IPR004549">
    <property type="entry name" value="Acetyl_CoA_COase_biotin_COase"/>
</dbReference>
<dbReference type="InterPro" id="IPR011761">
    <property type="entry name" value="ATP-grasp"/>
</dbReference>
<dbReference type="InterPro" id="IPR013815">
    <property type="entry name" value="ATP_grasp_subdomain_1"/>
</dbReference>
<dbReference type="InterPro" id="IPR005481">
    <property type="entry name" value="BC-like_N"/>
</dbReference>
<dbReference type="InterPro" id="IPR011764">
    <property type="entry name" value="Biotin_carboxylation_dom"/>
</dbReference>
<dbReference type="InterPro" id="IPR005482">
    <property type="entry name" value="Biotin_COase_C"/>
</dbReference>
<dbReference type="InterPro" id="IPR005479">
    <property type="entry name" value="CbamoylP_synth_lsu-like_ATP-bd"/>
</dbReference>
<dbReference type="InterPro" id="IPR016185">
    <property type="entry name" value="PreATP-grasp_dom_sf"/>
</dbReference>
<dbReference type="InterPro" id="IPR011054">
    <property type="entry name" value="Rudment_hybrid_motif"/>
</dbReference>
<dbReference type="NCBIfam" id="TIGR00514">
    <property type="entry name" value="accC"/>
    <property type="match status" value="1"/>
</dbReference>
<dbReference type="NCBIfam" id="NF006367">
    <property type="entry name" value="PRK08591.1"/>
    <property type="match status" value="1"/>
</dbReference>
<dbReference type="PANTHER" id="PTHR48095:SF2">
    <property type="entry name" value="BIOTIN CARBOXYLASE, CHLOROPLASTIC"/>
    <property type="match status" value="1"/>
</dbReference>
<dbReference type="PANTHER" id="PTHR48095">
    <property type="entry name" value="PYRUVATE CARBOXYLASE SUBUNIT A"/>
    <property type="match status" value="1"/>
</dbReference>
<dbReference type="Pfam" id="PF02785">
    <property type="entry name" value="Biotin_carb_C"/>
    <property type="match status" value="1"/>
</dbReference>
<dbReference type="Pfam" id="PF00289">
    <property type="entry name" value="Biotin_carb_N"/>
    <property type="match status" value="1"/>
</dbReference>
<dbReference type="Pfam" id="PF02786">
    <property type="entry name" value="CPSase_L_D2"/>
    <property type="match status" value="1"/>
</dbReference>
<dbReference type="SMART" id="SM00878">
    <property type="entry name" value="Biotin_carb_C"/>
    <property type="match status" value="1"/>
</dbReference>
<dbReference type="SUPFAM" id="SSF56059">
    <property type="entry name" value="Glutathione synthetase ATP-binding domain-like"/>
    <property type="match status" value="1"/>
</dbReference>
<dbReference type="SUPFAM" id="SSF52440">
    <property type="entry name" value="PreATP-grasp domain"/>
    <property type="match status" value="1"/>
</dbReference>
<dbReference type="SUPFAM" id="SSF51246">
    <property type="entry name" value="Rudiment single hybrid motif"/>
    <property type="match status" value="1"/>
</dbReference>
<dbReference type="PROSITE" id="PS50975">
    <property type="entry name" value="ATP_GRASP"/>
    <property type="match status" value="1"/>
</dbReference>
<dbReference type="PROSITE" id="PS50979">
    <property type="entry name" value="BC"/>
    <property type="match status" value="1"/>
</dbReference>
<dbReference type="PROSITE" id="PS00866">
    <property type="entry name" value="CPSASE_1"/>
    <property type="match status" value="1"/>
</dbReference>
<dbReference type="PROSITE" id="PS00867">
    <property type="entry name" value="CPSASE_2"/>
    <property type="match status" value="1"/>
</dbReference>